<sequence>MDVFKQMSFKELMKVLGLGTVAFVLGVEWLNWLTRRLRDSRGPLKEVLFFPSPQVCVEHLFTSHRSFPCACPFPHGIQTSFSRLLEHLLSARTSLEMCIFSFSNMEMSRAILLLHKRGVVVRVVTDRDYMTITGSQIGALRKAGISVRHEMSSAVHMHHKFALVDGRKLISGSLNWTLTAVQSNKENVIITEEPELVRPFQQEFLKLWEASDPANLKLQSKNGQIKK</sequence>
<protein>
    <recommendedName>
        <fullName>Mitochondrial cardiolipin hydrolase</fullName>
        <ecNumber evidence="1">3.1.-.-</ecNumber>
    </recommendedName>
    <alternativeName>
        <fullName>Choline phosphatase 6</fullName>
    </alternativeName>
    <alternativeName>
        <fullName evidence="2">Mitochondrial phospholipase</fullName>
        <shortName evidence="2">MitoPLD</shortName>
        <ecNumber evidence="2">3.1.4.-</ecNumber>
    </alternativeName>
    <alternativeName>
        <fullName>Phosphatidylcholine-hydrolyzing phospholipase D6</fullName>
    </alternativeName>
    <alternativeName>
        <fullName>Phospholipase D6</fullName>
        <shortName>PLD 6</shortName>
    </alternativeName>
</protein>
<gene>
    <name type="primary">pld6</name>
    <name type="ORF">zgc:162591</name>
</gene>
<name>PLD6_DANRE</name>
<reference key="1">
    <citation type="submission" date="2007-03" db="EMBL/GenBank/DDBJ databases">
        <authorList>
            <consortium name="NIH - Zebrafish Gene Collection (ZGC) project"/>
        </authorList>
    </citation>
    <scope>NUCLEOTIDE SEQUENCE [LARGE SCALE MRNA]</scope>
    <source>
        <tissue>Embryo</tissue>
    </source>
</reference>
<organism>
    <name type="scientific">Danio rerio</name>
    <name type="common">Zebrafish</name>
    <name type="synonym">Brachydanio rerio</name>
    <dbReference type="NCBI Taxonomy" id="7955"/>
    <lineage>
        <taxon>Eukaryota</taxon>
        <taxon>Metazoa</taxon>
        <taxon>Chordata</taxon>
        <taxon>Craniata</taxon>
        <taxon>Vertebrata</taxon>
        <taxon>Euteleostomi</taxon>
        <taxon>Actinopterygii</taxon>
        <taxon>Neopterygii</taxon>
        <taxon>Teleostei</taxon>
        <taxon>Ostariophysi</taxon>
        <taxon>Cypriniformes</taxon>
        <taxon>Danionidae</taxon>
        <taxon>Danioninae</taxon>
        <taxon>Danio</taxon>
    </lineage>
</organism>
<proteinExistence type="evidence at transcript level"/>
<keyword id="KW-0221">Differentiation</keyword>
<keyword id="KW-0255">Endonuclease</keyword>
<keyword id="KW-0378">Hydrolase</keyword>
<keyword id="KW-0442">Lipid degradation</keyword>
<keyword id="KW-0443">Lipid metabolism</keyword>
<keyword id="KW-0469">Meiosis</keyword>
<keyword id="KW-0472">Membrane</keyword>
<keyword id="KW-0479">Metal-binding</keyword>
<keyword id="KW-0496">Mitochondrion</keyword>
<keyword id="KW-1000">Mitochondrion outer membrane</keyword>
<keyword id="KW-0540">Nuclease</keyword>
<keyword id="KW-1185">Reference proteome</keyword>
<keyword id="KW-0744">Spermatogenesis</keyword>
<keyword id="KW-0812">Transmembrane</keyword>
<keyword id="KW-1133">Transmembrane helix</keyword>
<comment type="function">
    <text evidence="1 2">Presents phospholipase and nuclease activities, depending on the different physiological conditions. Plays a key role in mitochondrial fusion and fission via its phospholipase activity. In its phospholipase role, it uses the mitochondrial lipid cardiolipin as substrate to generate phosphatidate (PA or 1,2-diacyl-sn-glycero-3-phosphate), a second messenger signaling lipid. Production of PA facilitates Mitofusin-mediated fusion, whereas the cleavage of PA by the Lipin family of phosphatases produces diacylgycerol (DAG) which promotes mitochondrial fission. Regulates mitochondrial shape through facilitating mitochondrial fusion. During spermatogenesis, plays a critical role in PIWI-interacting RNA (piRNA) biogenesis (By similarity). piRNAs provide essential protection against the activity of mobile genetic elements. piRNA-mediated transposon silencing is thus critical for maintaining genome stability, in particular in germline cells when transposons are mobilized as a consequence of wide-spread genomic demethylation. Has been shown to be a backbone-non-specific, single strand-specific nuclease, cleaving either RNA or DNA substrates with similar affinity (By similarity). Produces 5' phosphate and 3' hydroxyl termini, suggesting it could directly participate in the processing of primary piRNA transcripts (By similarity). Has been proposed to act as a cardiolipin hydrolase to generate phosphatidic acid at mitochondrial surface. Although it cannot be excluded that it can act as a phospholipase in some circumstances, this activity could not be confirmed (By similarity).</text>
</comment>
<comment type="catalytic activity">
    <reaction evidence="2">
        <text>a cardiolipin + H2O = a 1,2-diacyl-sn-glycero-3-phospho-(1'-sn-glycerol) + a 1,2-diacyl-sn-glycero-3-phosphate + H(+)</text>
        <dbReference type="Rhea" id="RHEA:44884"/>
        <dbReference type="ChEBI" id="CHEBI:15377"/>
        <dbReference type="ChEBI" id="CHEBI:15378"/>
        <dbReference type="ChEBI" id="CHEBI:58608"/>
        <dbReference type="ChEBI" id="CHEBI:62237"/>
        <dbReference type="ChEBI" id="CHEBI:64716"/>
    </reaction>
    <physiologicalReaction direction="left-to-right" evidence="2">
        <dbReference type="Rhea" id="RHEA:44885"/>
    </physiologicalReaction>
</comment>
<comment type="subunit">
    <text evidence="1">Homodimer.</text>
</comment>
<comment type="subcellular location">
    <subcellularLocation>
        <location evidence="1">Mitochondrion outer membrane</location>
        <topology evidence="1">Single-pass membrane protein</topology>
    </subcellularLocation>
</comment>
<comment type="domain">
    <text evidence="2">In contrast to other members of the phospholipase D family, contains only one PLD phosphodiesterase domain, suggesting that it has a single half-catalytic and requires homodimerization to form a complete active site.</text>
</comment>
<comment type="similarity">
    <text evidence="4">Belongs to the phospholipase D family. MitoPLD/Zucchini subfamily.</text>
</comment>
<feature type="chain" id="PRO_0000325912" description="Mitochondrial cardiolipin hydrolase">
    <location>
        <begin position="1"/>
        <end position="227"/>
    </location>
</feature>
<feature type="topological domain" description="Mitochondrial intermembrane" evidence="3">
    <location>
        <begin position="1"/>
        <end position="14"/>
    </location>
</feature>
<feature type="transmembrane region" description="Helical" evidence="3">
    <location>
        <begin position="15"/>
        <end position="33"/>
    </location>
</feature>
<feature type="topological domain" description="Cytoplasmic" evidence="3">
    <location>
        <begin position="34"/>
        <end position="227"/>
    </location>
</feature>
<feature type="domain" description="PLD phosphodiesterase">
    <location>
        <begin position="153"/>
        <end position="180"/>
    </location>
</feature>
<feature type="active site" evidence="3">
    <location>
        <position position="158"/>
    </location>
</feature>
<feature type="active site" evidence="3">
    <location>
        <position position="160"/>
    </location>
</feature>
<feature type="active site" evidence="3">
    <location>
        <position position="165"/>
    </location>
</feature>
<feature type="sequence conflict" description="In Ref. 1; AAI34036." evidence="4" ref="1">
    <original>F</original>
    <variation>L</variation>
    <location>
        <position position="73"/>
    </location>
</feature>
<feature type="sequence conflict" description="In Ref. 1; AAI34036." evidence="4" ref="1">
    <original>L</original>
    <variation>H</variation>
    <location>
        <position position="216"/>
    </location>
</feature>
<evidence type="ECO:0000250" key="1">
    <source>
        <dbReference type="UniProtKB" id="Q5SWZ9"/>
    </source>
</evidence>
<evidence type="ECO:0000250" key="2">
    <source>
        <dbReference type="UniProtKB" id="Q8N2A8"/>
    </source>
</evidence>
<evidence type="ECO:0000255" key="3"/>
<evidence type="ECO:0000305" key="4"/>
<accession>A3KNW0</accession>
<accession>B8A667</accession>
<dbReference type="EC" id="3.1.-.-" evidence="1"/>
<dbReference type="EC" id="3.1.4.-" evidence="2"/>
<dbReference type="EMBL" id="BX901942">
    <property type="protein sequence ID" value="CAX14562.1"/>
    <property type="molecule type" value="Genomic_DNA"/>
</dbReference>
<dbReference type="EMBL" id="BC134035">
    <property type="protein sequence ID" value="AAI34036.1"/>
    <property type="molecule type" value="mRNA"/>
</dbReference>
<dbReference type="RefSeq" id="NP_001082883.1">
    <property type="nucleotide sequence ID" value="NM_001089414.1"/>
</dbReference>
<dbReference type="SMR" id="A3KNW0"/>
<dbReference type="FunCoup" id="A3KNW0">
    <property type="interactions" value="97"/>
</dbReference>
<dbReference type="STRING" id="7955.ENSDARP00000078381"/>
<dbReference type="PaxDb" id="7955-ENSDARP00000078381"/>
<dbReference type="PeptideAtlas" id="A3KNW0"/>
<dbReference type="Ensembl" id="ENSDART00000083946">
    <property type="protein sequence ID" value="ENSDARP00000078381"/>
    <property type="gene ID" value="ENSDARG00000059951"/>
</dbReference>
<dbReference type="GeneID" id="567338"/>
<dbReference type="KEGG" id="dre:567338"/>
<dbReference type="AGR" id="ZFIN:ZDB-GENE-030131-3825"/>
<dbReference type="CTD" id="201164"/>
<dbReference type="ZFIN" id="ZDB-GENE-030131-3825">
    <property type="gene designation" value="pld6"/>
</dbReference>
<dbReference type="eggNOG" id="ENOG502RXG9">
    <property type="taxonomic scope" value="Eukaryota"/>
</dbReference>
<dbReference type="HOGENOM" id="CLU_080814_0_1_1"/>
<dbReference type="InParanoid" id="A3KNW0"/>
<dbReference type="OMA" id="RIWEEFD"/>
<dbReference type="OrthoDB" id="5205528at2759"/>
<dbReference type="PhylomeDB" id="A3KNW0"/>
<dbReference type="TreeFam" id="TF332817"/>
<dbReference type="Reactome" id="R-DRE-1483166">
    <property type="pathway name" value="Synthesis of PA"/>
</dbReference>
<dbReference type="PRO" id="PR:A3KNW0"/>
<dbReference type="Proteomes" id="UP000000437">
    <property type="component" value="Chromosome 1"/>
</dbReference>
<dbReference type="Bgee" id="ENSDARG00000059951">
    <property type="expression patterns" value="Expressed in testis and 16 other cell types or tissues"/>
</dbReference>
<dbReference type="GO" id="GO:0005741">
    <property type="term" value="C:mitochondrial outer membrane"/>
    <property type="evidence" value="ECO:0000250"/>
    <property type="project" value="UniProtKB"/>
</dbReference>
<dbReference type="GO" id="GO:0005739">
    <property type="term" value="C:mitochondrion"/>
    <property type="evidence" value="ECO:0000318"/>
    <property type="project" value="GO_Central"/>
</dbReference>
<dbReference type="GO" id="GO:0035755">
    <property type="term" value="F:cardiolipin hydrolase activity"/>
    <property type="evidence" value="ECO:0000250"/>
    <property type="project" value="UniProtKB"/>
</dbReference>
<dbReference type="GO" id="GO:0046872">
    <property type="term" value="F:metal ion binding"/>
    <property type="evidence" value="ECO:0007669"/>
    <property type="project" value="UniProtKB-KW"/>
</dbReference>
<dbReference type="GO" id="GO:0042803">
    <property type="term" value="F:protein homodimerization activity"/>
    <property type="evidence" value="ECO:0000250"/>
    <property type="project" value="UniProtKB"/>
</dbReference>
<dbReference type="GO" id="GO:0016891">
    <property type="term" value="F:RNA endonuclease activity, producing 5'-phosphomonoesters"/>
    <property type="evidence" value="ECO:0000318"/>
    <property type="project" value="GO_Central"/>
</dbReference>
<dbReference type="GO" id="GO:0016042">
    <property type="term" value="P:lipid catabolic process"/>
    <property type="evidence" value="ECO:0007669"/>
    <property type="project" value="UniProtKB-KW"/>
</dbReference>
<dbReference type="GO" id="GO:0051321">
    <property type="term" value="P:meiotic cell cycle"/>
    <property type="evidence" value="ECO:0000250"/>
    <property type="project" value="UniProtKB"/>
</dbReference>
<dbReference type="GO" id="GO:0008053">
    <property type="term" value="P:mitochondrial fusion"/>
    <property type="evidence" value="ECO:0000250"/>
    <property type="project" value="UniProtKB"/>
</dbReference>
<dbReference type="GO" id="GO:0030719">
    <property type="term" value="P:P granule organization"/>
    <property type="evidence" value="ECO:0000250"/>
    <property type="project" value="UniProtKB"/>
</dbReference>
<dbReference type="GO" id="GO:0034587">
    <property type="term" value="P:piRNA processing"/>
    <property type="evidence" value="ECO:0000318"/>
    <property type="project" value="GO_Central"/>
</dbReference>
<dbReference type="GO" id="GO:0007286">
    <property type="term" value="P:spermatid development"/>
    <property type="evidence" value="ECO:0000250"/>
    <property type="project" value="UniProtKB"/>
</dbReference>
<dbReference type="CDD" id="cd09171">
    <property type="entry name" value="PLDc_vPLD6_like"/>
    <property type="match status" value="1"/>
</dbReference>
<dbReference type="Gene3D" id="3.30.870.10">
    <property type="entry name" value="Endonuclease Chain A"/>
    <property type="match status" value="1"/>
</dbReference>
<dbReference type="InterPro" id="IPR025202">
    <property type="entry name" value="PLD-like_dom"/>
</dbReference>
<dbReference type="InterPro" id="IPR051406">
    <property type="entry name" value="PLD_domain"/>
</dbReference>
<dbReference type="PANTHER" id="PTHR43856">
    <property type="entry name" value="CARDIOLIPIN HYDROLASE"/>
    <property type="match status" value="1"/>
</dbReference>
<dbReference type="PANTHER" id="PTHR43856:SF1">
    <property type="entry name" value="MITOCHONDRIAL CARDIOLIPIN HYDROLASE"/>
    <property type="match status" value="1"/>
</dbReference>
<dbReference type="Pfam" id="PF13091">
    <property type="entry name" value="PLDc_2"/>
    <property type="match status" value="1"/>
</dbReference>
<dbReference type="SUPFAM" id="SSF56024">
    <property type="entry name" value="Phospholipase D/nuclease"/>
    <property type="match status" value="1"/>
</dbReference>